<protein>
    <recommendedName>
        <fullName>Putative inactive flavonol synthase 2</fullName>
    </recommendedName>
</protein>
<organism>
    <name type="scientific">Arabidopsis thaliana</name>
    <name type="common">Mouse-ear cress</name>
    <dbReference type="NCBI Taxonomy" id="3702"/>
    <lineage>
        <taxon>Eukaryota</taxon>
        <taxon>Viridiplantae</taxon>
        <taxon>Streptophyta</taxon>
        <taxon>Embryophyta</taxon>
        <taxon>Tracheophyta</taxon>
        <taxon>Spermatophyta</taxon>
        <taxon>Magnoliopsida</taxon>
        <taxon>eudicotyledons</taxon>
        <taxon>Gunneridae</taxon>
        <taxon>Pentapetalae</taxon>
        <taxon>rosids</taxon>
        <taxon>malvids</taxon>
        <taxon>Brassicales</taxon>
        <taxon>Brassicaceae</taxon>
        <taxon>Camelineae</taxon>
        <taxon>Arabidopsis</taxon>
    </lineage>
</organism>
<proteinExistence type="uncertain"/>
<name>FLAS2_ARATH</name>
<accession>B2GVM7</accession>
<accession>Q84WQ4</accession>
<accession>Q9FFQ6</accession>
<gene>
    <name type="primary">FLS2</name>
    <name type="ordered locus">At5g63580</name>
    <name type="ORF">MBK5.4</name>
</gene>
<dbReference type="EMBL" id="AB005234">
    <property type="protein sequence ID" value="BAB10451.1"/>
    <property type="status" value="ALT_SEQ"/>
    <property type="molecule type" value="Genomic_DNA"/>
</dbReference>
<dbReference type="EMBL" id="CP002688">
    <property type="protein sequence ID" value="AED97771.1"/>
    <property type="molecule type" value="Genomic_DNA"/>
</dbReference>
<dbReference type="EMBL" id="BT031358">
    <property type="protein sequence ID" value="ACB88828.1"/>
    <property type="molecule type" value="mRNA"/>
</dbReference>
<dbReference type="EMBL" id="BT002895">
    <property type="protein sequence ID" value="AAO22711.1"/>
    <property type="molecule type" value="mRNA"/>
</dbReference>
<dbReference type="RefSeq" id="NP_201163.1">
    <property type="nucleotide sequence ID" value="NM_125753.3"/>
</dbReference>
<dbReference type="SMR" id="B2GVM7"/>
<dbReference type="FunCoup" id="B2GVM7">
    <property type="interactions" value="24"/>
</dbReference>
<dbReference type="STRING" id="3702.B2GVM7"/>
<dbReference type="PaxDb" id="3702-AT5G63580.1"/>
<dbReference type="EnsemblPlants" id="AT5G63580.1">
    <property type="protein sequence ID" value="AT5G63580.1"/>
    <property type="gene ID" value="AT5G63580"/>
</dbReference>
<dbReference type="GeneID" id="836477"/>
<dbReference type="Gramene" id="AT5G63580.1">
    <property type="protein sequence ID" value="AT5G63580.1"/>
    <property type="gene ID" value="AT5G63580"/>
</dbReference>
<dbReference type="KEGG" id="ath:AT5G63580"/>
<dbReference type="Araport" id="AT5G63580"/>
<dbReference type="TAIR" id="AT5G63580">
    <property type="gene designation" value="FLS2"/>
</dbReference>
<dbReference type="eggNOG" id="KOG0143">
    <property type="taxonomic scope" value="Eukaryota"/>
</dbReference>
<dbReference type="HOGENOM" id="CLU_010119_16_2_1"/>
<dbReference type="InParanoid" id="B2GVM7"/>
<dbReference type="PhylomeDB" id="B2GVM7"/>
<dbReference type="BRENDA" id="1.14.20.6">
    <property type="organism ID" value="399"/>
</dbReference>
<dbReference type="Proteomes" id="UP000006548">
    <property type="component" value="Chromosome 5"/>
</dbReference>
<dbReference type="ExpressionAtlas" id="B2GVM7">
    <property type="expression patterns" value="baseline and differential"/>
</dbReference>
<dbReference type="GO" id="GO:0045431">
    <property type="term" value="F:flavonol synthase activity"/>
    <property type="evidence" value="ECO:0000250"/>
    <property type="project" value="TAIR"/>
</dbReference>
<dbReference type="GO" id="GO:0046872">
    <property type="term" value="F:metal ion binding"/>
    <property type="evidence" value="ECO:0007669"/>
    <property type="project" value="UniProtKB-KW"/>
</dbReference>
<dbReference type="GO" id="GO:0009813">
    <property type="term" value="P:flavonoid biosynthetic process"/>
    <property type="evidence" value="ECO:0000250"/>
    <property type="project" value="TAIR"/>
</dbReference>
<dbReference type="FunFam" id="2.60.120.330:FF:000067">
    <property type="entry name" value="Probable flavonol synthase 5"/>
    <property type="match status" value="1"/>
</dbReference>
<dbReference type="Gene3D" id="2.60.120.330">
    <property type="entry name" value="B-lactam Antibiotic, Isopenicillin N Synthase, Chain"/>
    <property type="match status" value="1"/>
</dbReference>
<dbReference type="InterPro" id="IPR026992">
    <property type="entry name" value="DIOX_N"/>
</dbReference>
<dbReference type="InterPro" id="IPR044861">
    <property type="entry name" value="IPNS-like_FE2OG_OXY"/>
</dbReference>
<dbReference type="InterPro" id="IPR027443">
    <property type="entry name" value="IPNS-like_sf"/>
</dbReference>
<dbReference type="InterPro" id="IPR005123">
    <property type="entry name" value="Oxoglu/Fe-dep_dioxygenase_dom"/>
</dbReference>
<dbReference type="InterPro" id="IPR050295">
    <property type="entry name" value="Plant_2OG-oxidoreductases"/>
</dbReference>
<dbReference type="PANTHER" id="PTHR47991">
    <property type="entry name" value="OXOGLUTARATE/IRON-DEPENDENT DIOXYGENASE"/>
    <property type="match status" value="1"/>
</dbReference>
<dbReference type="Pfam" id="PF03171">
    <property type="entry name" value="2OG-FeII_Oxy"/>
    <property type="match status" value="1"/>
</dbReference>
<dbReference type="Pfam" id="PF14226">
    <property type="entry name" value="DIOX_N"/>
    <property type="match status" value="1"/>
</dbReference>
<dbReference type="SUPFAM" id="SSF51197">
    <property type="entry name" value="Clavaminate synthase-like"/>
    <property type="match status" value="1"/>
</dbReference>
<dbReference type="PROSITE" id="PS51471">
    <property type="entry name" value="FE2OG_OXY"/>
    <property type="match status" value="1"/>
</dbReference>
<reference key="1">
    <citation type="journal article" date="1997" name="DNA Res.">
        <title>Structural analysis of Arabidopsis thaliana chromosome 5. I. Sequence features of the 1.6 Mb regions covered by twenty physically assigned P1 clones.</title>
        <authorList>
            <person name="Sato S."/>
            <person name="Kotani H."/>
            <person name="Nakamura Y."/>
            <person name="Kaneko T."/>
            <person name="Asamizu E."/>
            <person name="Fukami M."/>
            <person name="Miyajima N."/>
            <person name="Tabata S."/>
        </authorList>
    </citation>
    <scope>NUCLEOTIDE SEQUENCE [LARGE SCALE GENOMIC DNA]</scope>
    <source>
        <strain>cv. Columbia</strain>
    </source>
</reference>
<reference key="2">
    <citation type="journal article" date="2017" name="Plant J.">
        <title>Araport11: a complete reannotation of the Arabidopsis thaliana reference genome.</title>
        <authorList>
            <person name="Cheng C.Y."/>
            <person name="Krishnakumar V."/>
            <person name="Chan A.P."/>
            <person name="Thibaud-Nissen F."/>
            <person name="Schobel S."/>
            <person name="Town C.D."/>
        </authorList>
    </citation>
    <scope>GENOME REANNOTATION</scope>
    <source>
        <strain>cv. Columbia</strain>
    </source>
</reference>
<reference key="3">
    <citation type="submission" date="2008-04" db="EMBL/GenBank/DDBJ databases">
        <title>Arabidopsis ORF clones.</title>
        <authorList>
            <person name="De Los Reyes C."/>
            <person name="Quan R."/>
            <person name="Chen H."/>
            <person name="Bautista V.R."/>
            <person name="Kim C.J."/>
            <person name="Ecker J.R."/>
        </authorList>
    </citation>
    <scope>NUCLEOTIDE SEQUENCE [GENOMIC DNA / MRNA]</scope>
    <source>
        <strain>cv. Columbia</strain>
    </source>
</reference>
<reference key="4">
    <citation type="journal article" date="2003" name="Science">
        <title>Empirical analysis of transcriptional activity in the Arabidopsis genome.</title>
        <authorList>
            <person name="Yamada K."/>
            <person name="Lim J."/>
            <person name="Dale J.M."/>
            <person name="Chen H."/>
            <person name="Shinn P."/>
            <person name="Palm C.J."/>
            <person name="Southwick A.M."/>
            <person name="Wu H.C."/>
            <person name="Kim C.J."/>
            <person name="Nguyen M."/>
            <person name="Pham P.K."/>
            <person name="Cheuk R.F."/>
            <person name="Karlin-Newmann G."/>
            <person name="Liu S.X."/>
            <person name="Lam B."/>
            <person name="Sakano H."/>
            <person name="Wu T."/>
            <person name="Yu G."/>
            <person name="Miranda M."/>
            <person name="Quach H.L."/>
            <person name="Tripp M."/>
            <person name="Chang C.H."/>
            <person name="Lee J.M."/>
            <person name="Toriumi M.J."/>
            <person name="Chan M.M."/>
            <person name="Tang C.C."/>
            <person name="Onodera C.S."/>
            <person name="Deng J.M."/>
            <person name="Akiyama K."/>
            <person name="Ansari Y."/>
            <person name="Arakawa T."/>
            <person name="Banh J."/>
            <person name="Banno F."/>
            <person name="Bowser L."/>
            <person name="Brooks S.Y."/>
            <person name="Carninci P."/>
            <person name="Chao Q."/>
            <person name="Choy N."/>
            <person name="Enju A."/>
            <person name="Goldsmith A.D."/>
            <person name="Gurjal M."/>
            <person name="Hansen N.F."/>
            <person name="Hayashizaki Y."/>
            <person name="Johnson-Hopson C."/>
            <person name="Hsuan V.W."/>
            <person name="Iida K."/>
            <person name="Karnes M."/>
            <person name="Khan S."/>
            <person name="Koesema E."/>
            <person name="Ishida J."/>
            <person name="Jiang P.X."/>
            <person name="Jones T."/>
            <person name="Kawai J."/>
            <person name="Kamiya A."/>
            <person name="Meyers C."/>
            <person name="Nakajima M."/>
            <person name="Narusaka M."/>
            <person name="Seki M."/>
            <person name="Sakurai T."/>
            <person name="Satou M."/>
            <person name="Tamse R."/>
            <person name="Vaysberg M."/>
            <person name="Wallender E.K."/>
            <person name="Wong C."/>
            <person name="Yamamura Y."/>
            <person name="Yuan S."/>
            <person name="Shinozaki K."/>
            <person name="Davis R.W."/>
            <person name="Theologis A."/>
            <person name="Ecker J.R."/>
        </authorList>
    </citation>
    <scope>NUCLEOTIDE SEQUENCE [LARGE SCALE MRNA] OF 9-250</scope>
    <source>
        <strain>cv. Columbia</strain>
    </source>
</reference>
<reference key="5">
    <citation type="journal article" date="2008" name="Plant Physiol.">
        <title>Functional analysis of a predicted flavonol synthase gene family in Arabidopsis.</title>
        <authorList>
            <person name="Owens D.K."/>
            <person name="Alerding A.B."/>
            <person name="Crosby K.C."/>
            <person name="Bandara A.B."/>
            <person name="Westwood J.H."/>
            <person name="Winkel B.S."/>
        </authorList>
    </citation>
    <scope>GENE FAMILY</scope>
    <scope>NOMENCLATURE</scope>
</reference>
<sequence length="250" mass="28482">MEVERDQHISPPSLMAKTIPIIDLSNLDEELVAHAVVKGSEEWGIFHVVNHGIPMDLIQRLKDVGTQFFELPETEKKAVAKQDGSKDFEGYTTNLKYVKGEVWTENLFHRIWPPTCINFDYWPKNPPQYREVIEEYTKETKKLSERILGYLSEGLGLPSEALIQGLGGESTEYVMRINNYPPDPKPDLTLGVPEHTDIIGITIIITNEVPGLQIFKDDHWLDVHYIPSSITVNIGDQIMAEQWKVQECVA</sequence>
<evidence type="ECO:0000255" key="1">
    <source>
        <dbReference type="PROSITE-ProRule" id="PRU00805"/>
    </source>
</evidence>
<evidence type="ECO:0000305" key="2"/>
<feature type="chain" id="PRO_0000418024" description="Putative inactive flavonol synthase 2">
    <location>
        <begin position="1"/>
        <end position="250"/>
    </location>
</feature>
<feature type="domain" description="Fe2OG dioxygenase" evidence="1">
    <location>
        <begin position="171"/>
        <end position="250"/>
    </location>
</feature>
<feature type="binding site" evidence="1">
    <location>
        <position position="195"/>
    </location>
    <ligand>
        <name>Fe cation</name>
        <dbReference type="ChEBI" id="CHEBI:24875"/>
    </ligand>
</feature>
<feature type="binding site" evidence="1">
    <location>
        <position position="197"/>
    </location>
    <ligand>
        <name>Fe cation</name>
        <dbReference type="ChEBI" id="CHEBI:24875"/>
    </ligand>
</feature>
<keyword id="KW-0408">Iron</keyword>
<keyword id="KW-0479">Metal-binding</keyword>
<keyword id="KW-1185">Reference proteome</keyword>
<comment type="similarity">
    <text evidence="2">Belongs to the iron/ascorbate-dependent oxidoreductase family.</text>
</comment>
<comment type="caution">
    <text evidence="2">Could be the product of a pseudogene. Possesses a truncated Fe2OG dioxygenase domain which lacks 1 iron binding site.</text>
</comment>
<comment type="sequence caution" evidence="2">
    <conflict type="erroneous gene model prediction">
        <sequence resource="EMBL-CDS" id="BAB10451"/>
    </conflict>
</comment>